<feature type="signal peptide" evidence="1">
    <location>
        <begin position="1"/>
        <end position="21"/>
    </location>
</feature>
<feature type="chain" id="PRO_0000353982" description="Membrane-bound lytic murein transglycosylase F">
    <location>
        <begin position="22"/>
        <end position="518"/>
    </location>
</feature>
<feature type="region of interest" description="Non-LT domain" evidence="1">
    <location>
        <begin position="22"/>
        <end position="269"/>
    </location>
</feature>
<feature type="region of interest" description="LT domain" evidence="1">
    <location>
        <begin position="270"/>
        <end position="518"/>
    </location>
</feature>
<feature type="active site" evidence="1">
    <location>
        <position position="314"/>
    </location>
</feature>
<protein>
    <recommendedName>
        <fullName evidence="1">Membrane-bound lytic murein transglycosylase F</fullName>
        <ecNumber evidence="1">4.2.2.n1</ecNumber>
    </recommendedName>
    <alternativeName>
        <fullName evidence="1">Murein lyase F</fullName>
    </alternativeName>
</protein>
<reference key="1">
    <citation type="submission" date="2008-05" db="EMBL/GenBank/DDBJ databases">
        <title>Complete sequence of Shigella boydii serotype 18 strain BS512.</title>
        <authorList>
            <person name="Rasko D.A."/>
            <person name="Rosovitz M."/>
            <person name="Maurelli A.T."/>
            <person name="Myers G."/>
            <person name="Seshadri R."/>
            <person name="Cer R."/>
            <person name="Jiang L."/>
            <person name="Ravel J."/>
            <person name="Sebastian Y."/>
        </authorList>
    </citation>
    <scope>NUCLEOTIDE SEQUENCE [LARGE SCALE GENOMIC DNA]</scope>
    <source>
        <strain>CDC 3083-94 / BS512</strain>
    </source>
</reference>
<name>MLTF_SHIB3</name>
<proteinExistence type="inferred from homology"/>
<gene>
    <name evidence="1" type="primary">mltF</name>
    <name type="ordered locus">SbBS512_E2924</name>
</gene>
<dbReference type="EC" id="4.2.2.n1" evidence="1"/>
<dbReference type="EMBL" id="CP001063">
    <property type="protein sequence ID" value="ACD08244.1"/>
    <property type="molecule type" value="Genomic_DNA"/>
</dbReference>
<dbReference type="RefSeq" id="WP_000734184.1">
    <property type="nucleotide sequence ID" value="NC_010658.1"/>
</dbReference>
<dbReference type="SMR" id="B2TXX1"/>
<dbReference type="STRING" id="344609.SbBS512_E2924"/>
<dbReference type="CAZy" id="GH23">
    <property type="family name" value="Glycoside Hydrolase Family 23"/>
</dbReference>
<dbReference type="KEGG" id="sbc:SbBS512_E2924"/>
<dbReference type="HOGENOM" id="CLU_027494_0_1_6"/>
<dbReference type="Proteomes" id="UP000001030">
    <property type="component" value="Chromosome"/>
</dbReference>
<dbReference type="GO" id="GO:0009279">
    <property type="term" value="C:cell outer membrane"/>
    <property type="evidence" value="ECO:0007669"/>
    <property type="project" value="UniProtKB-SubCell"/>
</dbReference>
<dbReference type="GO" id="GO:0008933">
    <property type="term" value="F:peptidoglycan lytic transglycosylase activity"/>
    <property type="evidence" value="ECO:0007669"/>
    <property type="project" value="UniProtKB-UniRule"/>
</dbReference>
<dbReference type="GO" id="GO:0016998">
    <property type="term" value="P:cell wall macromolecule catabolic process"/>
    <property type="evidence" value="ECO:0007669"/>
    <property type="project" value="UniProtKB-UniRule"/>
</dbReference>
<dbReference type="GO" id="GO:0071555">
    <property type="term" value="P:cell wall organization"/>
    <property type="evidence" value="ECO:0007669"/>
    <property type="project" value="UniProtKB-KW"/>
</dbReference>
<dbReference type="GO" id="GO:0009253">
    <property type="term" value="P:peptidoglycan catabolic process"/>
    <property type="evidence" value="ECO:0007669"/>
    <property type="project" value="TreeGrafter"/>
</dbReference>
<dbReference type="CDD" id="cd13403">
    <property type="entry name" value="MLTF-like"/>
    <property type="match status" value="1"/>
</dbReference>
<dbReference type="CDD" id="cd01009">
    <property type="entry name" value="PBP2_YfhD_N"/>
    <property type="match status" value="1"/>
</dbReference>
<dbReference type="FunFam" id="1.10.530.10:FF:000003">
    <property type="entry name" value="Membrane-bound lytic murein transglycosylase F"/>
    <property type="match status" value="1"/>
</dbReference>
<dbReference type="FunFam" id="3.40.190.10:FF:000051">
    <property type="entry name" value="Membrane-bound lytic murein transglycosylase F"/>
    <property type="match status" value="1"/>
</dbReference>
<dbReference type="Gene3D" id="1.10.530.10">
    <property type="match status" value="1"/>
</dbReference>
<dbReference type="Gene3D" id="3.40.190.10">
    <property type="entry name" value="Periplasmic binding protein-like II"/>
    <property type="match status" value="2"/>
</dbReference>
<dbReference type="HAMAP" id="MF_02016">
    <property type="entry name" value="MltF"/>
    <property type="match status" value="1"/>
</dbReference>
<dbReference type="InterPro" id="IPR023346">
    <property type="entry name" value="Lysozyme-like_dom_sf"/>
</dbReference>
<dbReference type="InterPro" id="IPR023703">
    <property type="entry name" value="MltF"/>
</dbReference>
<dbReference type="InterPro" id="IPR001638">
    <property type="entry name" value="Solute-binding_3/MltF_N"/>
</dbReference>
<dbReference type="InterPro" id="IPR000189">
    <property type="entry name" value="Transglyc_AS"/>
</dbReference>
<dbReference type="InterPro" id="IPR008258">
    <property type="entry name" value="Transglycosylase_SLT_dom_1"/>
</dbReference>
<dbReference type="NCBIfam" id="NF008112">
    <property type="entry name" value="PRK10859.1"/>
    <property type="match status" value="1"/>
</dbReference>
<dbReference type="PANTHER" id="PTHR35936">
    <property type="entry name" value="MEMBRANE-BOUND LYTIC MUREIN TRANSGLYCOSYLASE F"/>
    <property type="match status" value="1"/>
</dbReference>
<dbReference type="PANTHER" id="PTHR35936:SF32">
    <property type="entry name" value="MEMBRANE-BOUND LYTIC MUREIN TRANSGLYCOSYLASE F"/>
    <property type="match status" value="1"/>
</dbReference>
<dbReference type="Pfam" id="PF00497">
    <property type="entry name" value="SBP_bac_3"/>
    <property type="match status" value="1"/>
</dbReference>
<dbReference type="Pfam" id="PF01464">
    <property type="entry name" value="SLT"/>
    <property type="match status" value="1"/>
</dbReference>
<dbReference type="SMART" id="SM00062">
    <property type="entry name" value="PBPb"/>
    <property type="match status" value="1"/>
</dbReference>
<dbReference type="SUPFAM" id="SSF53955">
    <property type="entry name" value="Lysozyme-like"/>
    <property type="match status" value="1"/>
</dbReference>
<dbReference type="SUPFAM" id="SSF53850">
    <property type="entry name" value="Periplasmic binding protein-like II"/>
    <property type="match status" value="1"/>
</dbReference>
<dbReference type="PROSITE" id="PS00922">
    <property type="entry name" value="TRANSGLYCOSYLASE"/>
    <property type="match status" value="1"/>
</dbReference>
<accession>B2TXX1</accession>
<keyword id="KW-0998">Cell outer membrane</keyword>
<keyword id="KW-0961">Cell wall biogenesis/degradation</keyword>
<keyword id="KW-0456">Lyase</keyword>
<keyword id="KW-0472">Membrane</keyword>
<keyword id="KW-1185">Reference proteome</keyword>
<keyword id="KW-0732">Signal</keyword>
<sequence>MKKLKINYLFIGILALLLAVALWPSIPWFGKADNRIAAIQARGELRVSTIHTPLTYNEINGKPFGLDYELAKQFADYLGVKLKVTVRQNISQLFDDLDNGNADLLAAGLVYNSERVKNYQPGPTYYSVSQQLVYKVGQYRPRTLCNLTAEQLTVAPGHVVVNDLQTLKETKFPELSWKVDDKKGSAELMEDVIEGKLDYTIADSVAISLFQRVHPELAVALDITDEQPVTWFSPLDGDNTLSAALLDFFNEMNEDGTLARIEEKYLGHGDDFDYVDTRTFLRAVDAVLPQLKPLFEKYAEEIDWRLLAAIAYQESHWDAQATSPTGVRGMMMLTKNTAQSLGITDRTDAEQSISGGVRYLQDMMSKVPESVPENERIWFALAAYNMGYAHMLDARALTAKTKGNPDSWADVKQRLPLLSQKPYYSKLTYGYARGHEAYAYVENIRKYQISLVGYLQEKEKQATEAAMQLAQDYPAVSPTELGKEKFPFLSFLSQSSSNYLTHSPSLLFSRKGSEEKQN</sequence>
<evidence type="ECO:0000255" key="1">
    <source>
        <dbReference type="HAMAP-Rule" id="MF_02016"/>
    </source>
</evidence>
<organism>
    <name type="scientific">Shigella boydii serotype 18 (strain CDC 3083-94 / BS512)</name>
    <dbReference type="NCBI Taxonomy" id="344609"/>
    <lineage>
        <taxon>Bacteria</taxon>
        <taxon>Pseudomonadati</taxon>
        <taxon>Pseudomonadota</taxon>
        <taxon>Gammaproteobacteria</taxon>
        <taxon>Enterobacterales</taxon>
        <taxon>Enterobacteriaceae</taxon>
        <taxon>Shigella</taxon>
    </lineage>
</organism>
<comment type="function">
    <text evidence="1">Murein-degrading enzyme that degrades murein glycan strands and insoluble, high-molecular weight murein sacculi, with the concomitant formation of a 1,6-anhydromuramoyl product. Lytic transglycosylases (LTs) play an integral role in the metabolism of the peptidoglycan (PG) sacculus. Their lytic action creates space within the PG sacculus to allow for its expansion as well as for the insertion of various structures such as secretion systems and flagella.</text>
</comment>
<comment type="catalytic activity">
    <reaction evidence="1">
        <text>Exolytic cleavage of the (1-&gt;4)-beta-glycosidic linkage between N-acetylmuramic acid (MurNAc) and N-acetylglucosamine (GlcNAc) residues in peptidoglycan, from either the reducing or the non-reducing ends of the peptidoglycan chains, with concomitant formation of a 1,6-anhydrobond in the MurNAc residue.</text>
        <dbReference type="EC" id="4.2.2.n1"/>
    </reaction>
</comment>
<comment type="subcellular location">
    <subcellularLocation>
        <location>Cell outer membrane</location>
        <topology>Peripheral membrane protein</topology>
    </subcellularLocation>
    <text evidence="1">Attached to the inner leaflet of the outer membrane.</text>
</comment>
<comment type="domain">
    <text evidence="1">The N-terminal domain does not have lytic activity and probably modulates enzymatic activity. The C-terminal domain is the catalytic active domain.</text>
</comment>
<comment type="similarity">
    <text evidence="1">In the N-terminal section; belongs to the bacterial solute-binding protein 3 family.</text>
</comment>
<comment type="similarity">
    <text evidence="1">In the C-terminal section; belongs to the transglycosylase Slt family.</text>
</comment>